<gene>
    <name evidence="1" type="primary">pepB</name>
    <name type="ordered locus">SbBS512_E2898</name>
</gene>
<keyword id="KW-0031">Aminopeptidase</keyword>
<keyword id="KW-0963">Cytoplasm</keyword>
<keyword id="KW-0378">Hydrolase</keyword>
<keyword id="KW-0464">Manganese</keyword>
<keyword id="KW-0479">Metal-binding</keyword>
<keyword id="KW-0645">Protease</keyword>
<keyword id="KW-1185">Reference proteome</keyword>
<comment type="function">
    <text evidence="1">Probably plays an important role in intracellular peptide degradation.</text>
</comment>
<comment type="catalytic activity">
    <reaction evidence="1">
        <text>Release of an N-terminal amino acid, Xaa, from a peptide or arylamide. Xaa is preferably Glu or Asp but may be other amino acids, including Leu, Met, His, Cys and Gln.</text>
        <dbReference type="EC" id="3.4.11.23"/>
    </reaction>
</comment>
<comment type="cofactor">
    <cofactor evidence="1">
        <name>Mn(2+)</name>
        <dbReference type="ChEBI" id="CHEBI:29035"/>
    </cofactor>
    <text evidence="1">Binds 2 manganese ions per subunit.</text>
</comment>
<comment type="subunit">
    <text evidence="1">Homohexamer.</text>
</comment>
<comment type="subcellular location">
    <subcellularLocation>
        <location evidence="1">Cytoplasm</location>
    </subcellularLocation>
</comment>
<comment type="similarity">
    <text evidence="1">Belongs to the peptidase M17 family.</text>
</comment>
<proteinExistence type="inferred from homology"/>
<reference key="1">
    <citation type="submission" date="2008-05" db="EMBL/GenBank/DDBJ databases">
        <title>Complete sequence of Shigella boydii serotype 18 strain BS512.</title>
        <authorList>
            <person name="Rasko D.A."/>
            <person name="Rosovitz M."/>
            <person name="Maurelli A.T."/>
            <person name="Myers G."/>
            <person name="Seshadri R."/>
            <person name="Cer R."/>
            <person name="Jiang L."/>
            <person name="Ravel J."/>
            <person name="Sebastian Y."/>
        </authorList>
    </citation>
    <scope>NUCLEOTIDE SEQUENCE [LARGE SCALE GENOMIC DNA]</scope>
    <source>
        <strain>CDC 3083-94 / BS512</strain>
    </source>
</reference>
<dbReference type="EC" id="3.4.11.23" evidence="1"/>
<dbReference type="EMBL" id="CP001063">
    <property type="protein sequence ID" value="ACD06375.1"/>
    <property type="molecule type" value="Genomic_DNA"/>
</dbReference>
<dbReference type="RefSeq" id="WP_000133575.1">
    <property type="nucleotide sequence ID" value="NC_010658.1"/>
</dbReference>
<dbReference type="SMR" id="B2TXU8"/>
<dbReference type="STRING" id="344609.SbBS512_E2898"/>
<dbReference type="MEROPS" id="M17.004"/>
<dbReference type="KEGG" id="sbc:SbBS512_E2898"/>
<dbReference type="HOGENOM" id="CLU_013734_7_1_6"/>
<dbReference type="Proteomes" id="UP000001030">
    <property type="component" value="Chromosome"/>
</dbReference>
<dbReference type="GO" id="GO:0005737">
    <property type="term" value="C:cytoplasm"/>
    <property type="evidence" value="ECO:0007669"/>
    <property type="project" value="UniProtKB-SubCell"/>
</dbReference>
<dbReference type="GO" id="GO:0030145">
    <property type="term" value="F:manganese ion binding"/>
    <property type="evidence" value="ECO:0007669"/>
    <property type="project" value="UniProtKB-UniRule"/>
</dbReference>
<dbReference type="GO" id="GO:0070006">
    <property type="term" value="F:metalloaminopeptidase activity"/>
    <property type="evidence" value="ECO:0007669"/>
    <property type="project" value="InterPro"/>
</dbReference>
<dbReference type="GO" id="GO:0006508">
    <property type="term" value="P:proteolysis"/>
    <property type="evidence" value="ECO:0007669"/>
    <property type="project" value="UniProtKB-UniRule"/>
</dbReference>
<dbReference type="CDD" id="cd00433">
    <property type="entry name" value="Peptidase_M17"/>
    <property type="match status" value="1"/>
</dbReference>
<dbReference type="FunFam" id="3.40.630.10:FF:000037">
    <property type="entry name" value="Peptidase B"/>
    <property type="match status" value="1"/>
</dbReference>
<dbReference type="Gene3D" id="3.40.630.10">
    <property type="entry name" value="Zn peptidases"/>
    <property type="match status" value="1"/>
</dbReference>
<dbReference type="HAMAP" id="MF_00504">
    <property type="entry name" value="Aminopeptidase_M17"/>
    <property type="match status" value="1"/>
</dbReference>
<dbReference type="InterPro" id="IPR011356">
    <property type="entry name" value="Leucine_aapep/pepB"/>
</dbReference>
<dbReference type="InterPro" id="IPR047620">
    <property type="entry name" value="M17_PepB-like_N"/>
</dbReference>
<dbReference type="InterPro" id="IPR008330">
    <property type="entry name" value="Pept_M17_PepB"/>
</dbReference>
<dbReference type="InterPro" id="IPR000819">
    <property type="entry name" value="Peptidase_M17_C"/>
</dbReference>
<dbReference type="NCBIfam" id="NF003450">
    <property type="entry name" value="PRK05015.1"/>
    <property type="match status" value="1"/>
</dbReference>
<dbReference type="PANTHER" id="PTHR11963">
    <property type="entry name" value="LEUCINE AMINOPEPTIDASE-RELATED"/>
    <property type="match status" value="1"/>
</dbReference>
<dbReference type="PANTHER" id="PTHR11963:SF20">
    <property type="entry name" value="PEPTIDASE B"/>
    <property type="match status" value="1"/>
</dbReference>
<dbReference type="Pfam" id="PF12404">
    <property type="entry name" value="DUF3663"/>
    <property type="match status" value="1"/>
</dbReference>
<dbReference type="Pfam" id="PF00883">
    <property type="entry name" value="Peptidase_M17"/>
    <property type="match status" value="1"/>
</dbReference>
<dbReference type="PIRSF" id="PIRSF036388">
    <property type="entry name" value="Ctsl_amnpptdse_B"/>
    <property type="match status" value="1"/>
</dbReference>
<dbReference type="PRINTS" id="PR00481">
    <property type="entry name" value="LAMNOPPTDASE"/>
</dbReference>
<dbReference type="SUPFAM" id="SSF53187">
    <property type="entry name" value="Zn-dependent exopeptidases"/>
    <property type="match status" value="1"/>
</dbReference>
<dbReference type="PROSITE" id="PS00631">
    <property type="entry name" value="CYTOSOL_AP"/>
    <property type="match status" value="1"/>
</dbReference>
<protein>
    <recommendedName>
        <fullName evidence="1">Peptidase B</fullName>
        <ecNumber evidence="1">3.4.11.23</ecNumber>
    </recommendedName>
    <alternativeName>
        <fullName evidence="1">Aminopeptidase B</fullName>
    </alternativeName>
</protein>
<feature type="chain" id="PRO_1000127017" description="Peptidase B">
    <location>
        <begin position="1"/>
        <end position="427"/>
    </location>
</feature>
<feature type="active site" evidence="1">
    <location>
        <position position="207"/>
    </location>
</feature>
<feature type="active site" evidence="1">
    <location>
        <position position="281"/>
    </location>
</feature>
<feature type="binding site" evidence="1">
    <location>
        <position position="195"/>
    </location>
    <ligand>
        <name>Mn(2+)</name>
        <dbReference type="ChEBI" id="CHEBI:29035"/>
        <label>2</label>
    </ligand>
</feature>
<feature type="binding site" evidence="1">
    <location>
        <position position="200"/>
    </location>
    <ligand>
        <name>Mn(2+)</name>
        <dbReference type="ChEBI" id="CHEBI:29035"/>
        <label>1</label>
    </ligand>
</feature>
<feature type="binding site" evidence="1">
    <location>
        <position position="200"/>
    </location>
    <ligand>
        <name>Mn(2+)</name>
        <dbReference type="ChEBI" id="CHEBI:29035"/>
        <label>2</label>
    </ligand>
</feature>
<feature type="binding site" evidence="1">
    <location>
        <position position="218"/>
    </location>
    <ligand>
        <name>Mn(2+)</name>
        <dbReference type="ChEBI" id="CHEBI:29035"/>
        <label>2</label>
    </ligand>
</feature>
<feature type="binding site" evidence="1">
    <location>
        <position position="277"/>
    </location>
    <ligand>
        <name>Mn(2+)</name>
        <dbReference type="ChEBI" id="CHEBI:29035"/>
        <label>1</label>
    </ligand>
</feature>
<feature type="binding site" evidence="1">
    <location>
        <position position="279"/>
    </location>
    <ligand>
        <name>Mn(2+)</name>
        <dbReference type="ChEBI" id="CHEBI:29035"/>
        <label>1</label>
    </ligand>
</feature>
<feature type="binding site" evidence="1">
    <location>
        <position position="279"/>
    </location>
    <ligand>
        <name>Mn(2+)</name>
        <dbReference type="ChEBI" id="CHEBI:29035"/>
        <label>2</label>
    </ligand>
</feature>
<organism>
    <name type="scientific">Shigella boydii serotype 18 (strain CDC 3083-94 / BS512)</name>
    <dbReference type="NCBI Taxonomy" id="344609"/>
    <lineage>
        <taxon>Bacteria</taxon>
        <taxon>Pseudomonadati</taxon>
        <taxon>Pseudomonadota</taxon>
        <taxon>Gammaproteobacteria</taxon>
        <taxon>Enterobacterales</taxon>
        <taxon>Enterobacteriaceae</taxon>
        <taxon>Shigella</taxon>
    </lineage>
</organism>
<accession>B2TXU8</accession>
<evidence type="ECO:0000255" key="1">
    <source>
        <dbReference type="HAMAP-Rule" id="MF_00504"/>
    </source>
</evidence>
<sequence length="427" mass="46240">MTEAMKITLSTQPADARWGEKATYSINNDGITLHLNGADDLGLIQRAARKIDGLGIKHVQLSGEGWDADRCWAFWQGYKAPKGTRKVEWPDLDDAQRQELDNRLMIIDWVRDTINAPAEELGPSQLAQRAVDLISNVAGDRVTYRITKGEDLREQGYMGLHTVGRASERSPVLLALDYNPTGDKEAPVYACLVGKGITFDSGGYSIKQTAFMDSMKSDMGGAATVTGALAFAITRGLNKRVKLFLCCADNLISGNAFKLGDIITYRNGKKVEVMNTDAEGRLVLADGLIDASAQKPEMIIDAATLTGAAKTALGNDYHALFSFDDALAGRLLASASQENEPFWRLPLAEFHRSQLPSNFAELNNTGSAAYPAGASTAAGFLSHFVENYQQGWLHIDCSATYRKAPVEQWSAGATGLGVRTIANLLTA</sequence>
<name>PEPB_SHIB3</name>